<organism evidence="9">
    <name type="scientific">Drosophila melanogaster</name>
    <name type="common">Fruit fly</name>
    <dbReference type="NCBI Taxonomy" id="7227"/>
    <lineage>
        <taxon>Eukaryota</taxon>
        <taxon>Metazoa</taxon>
        <taxon>Ecdysozoa</taxon>
        <taxon>Arthropoda</taxon>
        <taxon>Hexapoda</taxon>
        <taxon>Insecta</taxon>
        <taxon>Pterygota</taxon>
        <taxon>Neoptera</taxon>
        <taxon>Endopterygota</taxon>
        <taxon>Diptera</taxon>
        <taxon>Brachycera</taxon>
        <taxon>Muscomorpha</taxon>
        <taxon>Ephydroidea</taxon>
        <taxon>Drosophilidae</taxon>
        <taxon>Drosophila</taxon>
        <taxon>Sophophora</taxon>
    </lineage>
</organism>
<comment type="function">
    <text evidence="4">Essential for development and viability. Required for ovary development and oogenesis, and is essential for the development of the indirect flight muscles. May act as a negative regulator of the Notch signaling pathway in certain tissues, such as the muscle precursors and ovaries. May function as a linker protein between the actin and microtubule cytoskeletons.</text>
</comment>
<comment type="subcellular location">
    <subcellularLocation>
        <location evidence="4">Cytoplasm</location>
        <location evidence="4">Cytoskeleton</location>
    </subcellularLocation>
    <subcellularLocation>
        <location evidence="4">Cytoplasm</location>
        <location evidence="4">Cell cortex</location>
    </subcellularLocation>
    <text evidence="4">In the cytoskeleton associates with both actin and the microtubules.</text>
</comment>
<comment type="tissue specificity">
    <text evidence="4">Expressed in the ovary and the ring canals of the germline cells. In larvae, expressed in the notal region of the wing disk.</text>
</comment>
<comment type="miscellaneous">
    <text evidence="4">Named 'Picked eggs' based upon the mutant ovary phenotype.</text>
</comment>
<comment type="similarity">
    <text evidence="5">Belongs to the GAS2 family.</text>
</comment>
<comment type="sequence caution" evidence="5">
    <conflict type="erroneous initiation">
        <sequence resource="EMBL-CDS" id="AAL13365"/>
    </conflict>
    <text>Truncated N-terminus.</text>
</comment>
<keyword id="KW-0963">Cytoplasm</keyword>
<keyword id="KW-0206">Cytoskeleton</keyword>
<keyword id="KW-1185">Reference proteome</keyword>
<name>GA2PE_DROME</name>
<sequence>MAMLEARPYRPFKSSEEYLEAMREDLAEWLSTLYPELSINADNFMDRLDTGVALCKHANYVRQAAVDYLARRQARNKSMTRSMTSGLAGPILAMGNVHYLPAAKSGTFFARDNVSNFITWCRKSLKIIECLLFETDDLIMRKNEKHVILCLLEVARRGAKFGMLAPMLVQMERQIDREIAADIKANGAGCSENGTQTDALETGNSSAATMTTITTTTVETDLYDDSDDSETEDDGDQNPVLMYGPQPQIITNDLKSLDEMVRDLVEKCTCPSQFPMVRVSEGKYRIGDTKVLIFVRILRSHVMVRVGGGWDTLSHYLDKHDPCRCRAQHRSSVAARLIPRQSPNHNPSNGIELHKAQVIFERSPPAARRVFNSPNCNGGPGTGSSCGTGVVGVAVPPTLQNGHSLSPNSGKYRSRSPTPQRKFLNQQANGGGIASATGSSQTVTTDTSSGQLLGSPSLARRSMSPSPRRLIDMRKKQSSLDSYSSGPKSLPGYSCSMEEANGGSGVGSAAGGVSSGSAGSGVAGEQGGANKFENISDNGSEISDEGYRSLGVIQSGAQKRESLHSQASIEDAESNARLDQTSSDSQISPSDEPAEKATTDILEEEDLNGQDREEDQEDYSVCDGPQSLPAILSGAHKLSDKFEQSGVFITDDEITVDIAKTEDQSVANTMGNPTPNLSKIPRSPLAQRRRRSIDNSTCGGAGGSLQDLSSRSGLPAPAFSRKQPVYRSVRTRNSTGATTTPVAPPRSRQATQLPMVRDVTNTWSGRTTGAPKRRPPCTADTFVAPTNGTGPAGSFERNGKGRSSQILYDSNGRRVRSGAPGCTSSLTTSPVKNHASSPLAQQLLEAASSAKNDAQILEKMKSLLSRYAAGNQTKAGVGATATAANKINSNGKKTPVYEDFTTAWVHSNGNLERSESCSPPAKARSKRSSAASSCESNNSNAGAGSGAAAGSASVVSPRRERGMSKIPAPVRHHTELY</sequence>
<gene>
    <name evidence="8" type="primary">pigs</name>
    <name evidence="8" type="ORF">CG3973</name>
</gene>
<reference evidence="9" key="1">
    <citation type="journal article" date="2000" name="Science">
        <title>The genome sequence of Drosophila melanogaster.</title>
        <authorList>
            <person name="Adams M.D."/>
            <person name="Celniker S.E."/>
            <person name="Holt R.A."/>
            <person name="Evans C.A."/>
            <person name="Gocayne J.D."/>
            <person name="Amanatides P.G."/>
            <person name="Scherer S.E."/>
            <person name="Li P.W."/>
            <person name="Hoskins R.A."/>
            <person name="Galle R.F."/>
            <person name="George R.A."/>
            <person name="Lewis S.E."/>
            <person name="Richards S."/>
            <person name="Ashburner M."/>
            <person name="Henderson S.N."/>
            <person name="Sutton G.G."/>
            <person name="Wortman J.R."/>
            <person name="Yandell M.D."/>
            <person name="Zhang Q."/>
            <person name="Chen L.X."/>
            <person name="Brandon R.C."/>
            <person name="Rogers Y.-H.C."/>
            <person name="Blazej R.G."/>
            <person name="Champe M."/>
            <person name="Pfeiffer B.D."/>
            <person name="Wan K.H."/>
            <person name="Doyle C."/>
            <person name="Baxter E.G."/>
            <person name="Helt G."/>
            <person name="Nelson C.R."/>
            <person name="Miklos G.L.G."/>
            <person name="Abril J.F."/>
            <person name="Agbayani A."/>
            <person name="An H.-J."/>
            <person name="Andrews-Pfannkoch C."/>
            <person name="Baldwin D."/>
            <person name="Ballew R.M."/>
            <person name="Basu A."/>
            <person name="Baxendale J."/>
            <person name="Bayraktaroglu L."/>
            <person name="Beasley E.M."/>
            <person name="Beeson K.Y."/>
            <person name="Benos P.V."/>
            <person name="Berman B.P."/>
            <person name="Bhandari D."/>
            <person name="Bolshakov S."/>
            <person name="Borkova D."/>
            <person name="Botchan M.R."/>
            <person name="Bouck J."/>
            <person name="Brokstein P."/>
            <person name="Brottier P."/>
            <person name="Burtis K.C."/>
            <person name="Busam D.A."/>
            <person name="Butler H."/>
            <person name="Cadieu E."/>
            <person name="Center A."/>
            <person name="Chandra I."/>
            <person name="Cherry J.M."/>
            <person name="Cawley S."/>
            <person name="Dahlke C."/>
            <person name="Davenport L.B."/>
            <person name="Davies P."/>
            <person name="de Pablos B."/>
            <person name="Delcher A."/>
            <person name="Deng Z."/>
            <person name="Mays A.D."/>
            <person name="Dew I."/>
            <person name="Dietz S.M."/>
            <person name="Dodson K."/>
            <person name="Doup L.E."/>
            <person name="Downes M."/>
            <person name="Dugan-Rocha S."/>
            <person name="Dunkov B.C."/>
            <person name="Dunn P."/>
            <person name="Durbin K.J."/>
            <person name="Evangelista C.C."/>
            <person name="Ferraz C."/>
            <person name="Ferriera S."/>
            <person name="Fleischmann W."/>
            <person name="Fosler C."/>
            <person name="Gabrielian A.E."/>
            <person name="Garg N.S."/>
            <person name="Gelbart W.M."/>
            <person name="Glasser K."/>
            <person name="Glodek A."/>
            <person name="Gong F."/>
            <person name="Gorrell J.H."/>
            <person name="Gu Z."/>
            <person name="Guan P."/>
            <person name="Harris M."/>
            <person name="Harris N.L."/>
            <person name="Harvey D.A."/>
            <person name="Heiman T.J."/>
            <person name="Hernandez J.R."/>
            <person name="Houck J."/>
            <person name="Hostin D."/>
            <person name="Houston K.A."/>
            <person name="Howland T.J."/>
            <person name="Wei M.-H."/>
            <person name="Ibegwam C."/>
            <person name="Jalali M."/>
            <person name="Kalush F."/>
            <person name="Karpen G.H."/>
            <person name="Ke Z."/>
            <person name="Kennison J.A."/>
            <person name="Ketchum K.A."/>
            <person name="Kimmel B.E."/>
            <person name="Kodira C.D."/>
            <person name="Kraft C.L."/>
            <person name="Kravitz S."/>
            <person name="Kulp D."/>
            <person name="Lai Z."/>
            <person name="Lasko P."/>
            <person name="Lei Y."/>
            <person name="Levitsky A.A."/>
            <person name="Li J.H."/>
            <person name="Li Z."/>
            <person name="Liang Y."/>
            <person name="Lin X."/>
            <person name="Liu X."/>
            <person name="Mattei B."/>
            <person name="McIntosh T.C."/>
            <person name="McLeod M.P."/>
            <person name="McPherson D."/>
            <person name="Merkulov G."/>
            <person name="Milshina N.V."/>
            <person name="Mobarry C."/>
            <person name="Morris J."/>
            <person name="Moshrefi A."/>
            <person name="Mount S.M."/>
            <person name="Moy M."/>
            <person name="Murphy B."/>
            <person name="Murphy L."/>
            <person name="Muzny D.M."/>
            <person name="Nelson D.L."/>
            <person name="Nelson D.R."/>
            <person name="Nelson K.A."/>
            <person name="Nixon K."/>
            <person name="Nusskern D.R."/>
            <person name="Pacleb J.M."/>
            <person name="Palazzolo M."/>
            <person name="Pittman G.S."/>
            <person name="Pan S."/>
            <person name="Pollard J."/>
            <person name="Puri V."/>
            <person name="Reese M.G."/>
            <person name="Reinert K."/>
            <person name="Remington K."/>
            <person name="Saunders R.D.C."/>
            <person name="Scheeler F."/>
            <person name="Shen H."/>
            <person name="Shue B.C."/>
            <person name="Siden-Kiamos I."/>
            <person name="Simpson M."/>
            <person name="Skupski M.P."/>
            <person name="Smith T.J."/>
            <person name="Spier E."/>
            <person name="Spradling A.C."/>
            <person name="Stapleton M."/>
            <person name="Strong R."/>
            <person name="Sun E."/>
            <person name="Svirskas R."/>
            <person name="Tector C."/>
            <person name="Turner R."/>
            <person name="Venter E."/>
            <person name="Wang A.H."/>
            <person name="Wang X."/>
            <person name="Wang Z.-Y."/>
            <person name="Wassarman D.A."/>
            <person name="Weinstock G.M."/>
            <person name="Weissenbach J."/>
            <person name="Williams S.M."/>
            <person name="Woodage T."/>
            <person name="Worley K.C."/>
            <person name="Wu D."/>
            <person name="Yang S."/>
            <person name="Yao Q.A."/>
            <person name="Ye J."/>
            <person name="Yeh R.-F."/>
            <person name="Zaveri J.S."/>
            <person name="Zhan M."/>
            <person name="Zhang G."/>
            <person name="Zhao Q."/>
            <person name="Zheng L."/>
            <person name="Zheng X.H."/>
            <person name="Zhong F.N."/>
            <person name="Zhong W."/>
            <person name="Zhou X."/>
            <person name="Zhu S.C."/>
            <person name="Zhu X."/>
            <person name="Smith H.O."/>
            <person name="Gibbs R.A."/>
            <person name="Myers E.W."/>
            <person name="Rubin G.M."/>
            <person name="Venter J.C."/>
        </authorList>
    </citation>
    <scope>NUCLEOTIDE SEQUENCE [LARGE SCALE GENOMIC DNA]</scope>
    <source>
        <strain evidence="9">Berkeley</strain>
    </source>
</reference>
<reference evidence="9" key="2">
    <citation type="journal article" date="2002" name="Genome Biol.">
        <title>Annotation of the Drosophila melanogaster euchromatic genome: a systematic review.</title>
        <authorList>
            <person name="Misra S."/>
            <person name="Crosby M.A."/>
            <person name="Mungall C.J."/>
            <person name="Matthews B.B."/>
            <person name="Campbell K.S."/>
            <person name="Hradecky P."/>
            <person name="Huang Y."/>
            <person name="Kaminker J.S."/>
            <person name="Millburn G.H."/>
            <person name="Prochnik S.E."/>
            <person name="Smith C.D."/>
            <person name="Tupy J.L."/>
            <person name="Whitfield E.J."/>
            <person name="Bayraktaroglu L."/>
            <person name="Berman B.P."/>
            <person name="Bettencourt B.R."/>
            <person name="Celniker S.E."/>
            <person name="de Grey A.D.N.J."/>
            <person name="Drysdale R.A."/>
            <person name="Harris N.L."/>
            <person name="Richter J."/>
            <person name="Russo S."/>
            <person name="Schroeder A.J."/>
            <person name="Shu S.Q."/>
            <person name="Stapleton M."/>
            <person name="Yamada C."/>
            <person name="Ashburner M."/>
            <person name="Gelbart W.M."/>
            <person name="Rubin G.M."/>
            <person name="Lewis S.E."/>
        </authorList>
    </citation>
    <scope>GENOME REANNOTATION</scope>
    <source>
        <strain evidence="9">Berkeley</strain>
    </source>
</reference>
<reference evidence="7" key="3">
    <citation type="submission" date="2003-02" db="EMBL/GenBank/DDBJ databases">
        <authorList>
            <person name="Stapleton M."/>
            <person name="Brokstein P."/>
            <person name="Hong L."/>
            <person name="Agbayani A."/>
            <person name="Carlson J."/>
            <person name="Champe M."/>
            <person name="Chavez C."/>
            <person name="Dorsett V."/>
            <person name="Dresnek D."/>
            <person name="Farfan D."/>
            <person name="Frise E."/>
            <person name="George R."/>
            <person name="Gonzalez M."/>
            <person name="Guarin H."/>
            <person name="Kronmiller B."/>
            <person name="Li P."/>
            <person name="Liao G."/>
            <person name="Miranda A."/>
            <person name="Mungall C.J."/>
            <person name="Nunoo J."/>
            <person name="Pacleb J."/>
            <person name="Paragas V."/>
            <person name="Park S."/>
            <person name="Patel S."/>
            <person name="Phouanenavong S."/>
            <person name="Wan K."/>
            <person name="Yu C."/>
            <person name="Lewis S.E."/>
            <person name="Rubin G.M."/>
            <person name="Celniker S."/>
        </authorList>
    </citation>
    <scope>NUCLEOTIDE SEQUENCE [LARGE SCALE MRNA]</scope>
    <source>
        <strain evidence="7">Berkeley</strain>
        <tissue evidence="7">Embryo</tissue>
    </source>
</reference>
<reference evidence="6" key="4">
    <citation type="journal article" date="2002" name="Genome Biol.">
        <title>A Drosophila full-length cDNA resource.</title>
        <authorList>
            <person name="Stapleton M."/>
            <person name="Carlson J.W."/>
            <person name="Brokstein P."/>
            <person name="Yu C."/>
            <person name="Champe M."/>
            <person name="George R.A."/>
            <person name="Guarin H."/>
            <person name="Kronmiller B."/>
            <person name="Pacleb J.M."/>
            <person name="Park S."/>
            <person name="Wan K.H."/>
            <person name="Rubin G.M."/>
            <person name="Celniker S.E."/>
        </authorList>
    </citation>
    <scope>NUCLEOTIDE SEQUENCE [LARGE SCALE MRNA]</scope>
    <source>
        <tissue evidence="6">Embryo</tissue>
    </source>
</reference>
<reference evidence="5" key="5">
    <citation type="journal article" date="2010" name="Development">
        <title>The cytolinker Pigs is a direct target and a negative regulator of Notch signalling.</title>
        <authorList>
            <person name="Pines M.K."/>
            <person name="Housden B.E."/>
            <person name="Bernard F."/>
            <person name="Bray S.J."/>
            <person name="Roeper K."/>
        </authorList>
    </citation>
    <scope>FUNCTION</scope>
    <scope>SUBCELLULAR LOCATION</scope>
    <scope>TISSUE SPECIFICITY</scope>
</reference>
<proteinExistence type="evidence at transcript level"/>
<dbReference type="EMBL" id="AE014298">
    <property type="protein sequence ID" value="AAF46177.2"/>
    <property type="molecule type" value="Genomic_DNA"/>
</dbReference>
<dbReference type="EMBL" id="AE014298">
    <property type="protein sequence ID" value="AFH07264.1"/>
    <property type="molecule type" value="Genomic_DNA"/>
</dbReference>
<dbReference type="EMBL" id="AE014298">
    <property type="protein sequence ID" value="AHN59420.1"/>
    <property type="molecule type" value="Genomic_DNA"/>
</dbReference>
<dbReference type="EMBL" id="AY059459">
    <property type="protein sequence ID" value="AAL13365.1"/>
    <property type="status" value="ALT_INIT"/>
    <property type="molecule type" value="mRNA"/>
</dbReference>
<dbReference type="EMBL" id="BT003477">
    <property type="protein sequence ID" value="AAO39480.1"/>
    <property type="molecule type" value="mRNA"/>
</dbReference>
<dbReference type="RefSeq" id="NP_001245550.1">
    <property type="nucleotide sequence ID" value="NM_001258621.2"/>
</dbReference>
<dbReference type="RefSeq" id="NP_001284949.1">
    <property type="nucleotide sequence ID" value="NM_001298020.1"/>
</dbReference>
<dbReference type="RefSeq" id="NP_572331.2">
    <property type="nucleotide sequence ID" value="NM_132103.3"/>
</dbReference>
<dbReference type="SMR" id="Q9W3Y4"/>
<dbReference type="FunCoup" id="Q9W3Y4">
    <property type="interactions" value="18"/>
</dbReference>
<dbReference type="IntAct" id="Q9W3Y4">
    <property type="interactions" value="6"/>
</dbReference>
<dbReference type="STRING" id="7227.FBpp0310031"/>
<dbReference type="PaxDb" id="7227-FBpp0070909"/>
<dbReference type="EnsemblMetazoa" id="FBtr0070948">
    <property type="protein sequence ID" value="FBpp0070909"/>
    <property type="gene ID" value="FBgn0029881"/>
</dbReference>
<dbReference type="EnsemblMetazoa" id="FBtr0308653">
    <property type="protein sequence ID" value="FBpp0300876"/>
    <property type="gene ID" value="FBgn0029881"/>
</dbReference>
<dbReference type="EnsemblMetazoa" id="FBtr0343375">
    <property type="protein sequence ID" value="FBpp0310031"/>
    <property type="gene ID" value="FBgn0029881"/>
</dbReference>
<dbReference type="GeneID" id="31596"/>
<dbReference type="KEGG" id="dme:Dmel_CG3973"/>
<dbReference type="UCSC" id="CG3973-RA">
    <property type="organism name" value="d. melanogaster"/>
</dbReference>
<dbReference type="AGR" id="FB:FBgn0029881"/>
<dbReference type="CTD" id="94005"/>
<dbReference type="FlyBase" id="FBgn0029881">
    <property type="gene designation" value="pigs"/>
</dbReference>
<dbReference type="VEuPathDB" id="VectorBase:FBgn0029881"/>
<dbReference type="eggNOG" id="KOG0516">
    <property type="taxonomic scope" value="Eukaryota"/>
</dbReference>
<dbReference type="GeneTree" id="ENSGT00940000154849"/>
<dbReference type="HOGENOM" id="CLU_013204_0_0_1"/>
<dbReference type="InParanoid" id="Q9W3Y4"/>
<dbReference type="OMA" id="VADCQKQ"/>
<dbReference type="OrthoDB" id="206130at2759"/>
<dbReference type="PhylomeDB" id="Q9W3Y4"/>
<dbReference type="SignaLink" id="Q9W3Y4"/>
<dbReference type="BioGRID-ORCS" id="31596">
    <property type="hits" value="0 hits in 3 CRISPR screens"/>
</dbReference>
<dbReference type="ChiTaRS" id="pigs">
    <property type="organism name" value="fly"/>
</dbReference>
<dbReference type="GenomeRNAi" id="31596"/>
<dbReference type="PRO" id="PR:Q9W3Y4"/>
<dbReference type="Proteomes" id="UP000000803">
    <property type="component" value="Chromosome X"/>
</dbReference>
<dbReference type="Bgee" id="FBgn0029881">
    <property type="expression patterns" value="Expressed in head cyst cell (Drosophila) in testis and 274 other cell types or tissues"/>
</dbReference>
<dbReference type="GO" id="GO:0005938">
    <property type="term" value="C:cell cortex"/>
    <property type="evidence" value="ECO:0007669"/>
    <property type="project" value="UniProtKB-SubCell"/>
</dbReference>
<dbReference type="GO" id="GO:0005737">
    <property type="term" value="C:cytoplasm"/>
    <property type="evidence" value="ECO:0000318"/>
    <property type="project" value="GO_Central"/>
</dbReference>
<dbReference type="GO" id="GO:0005856">
    <property type="term" value="C:cytoskeleton"/>
    <property type="evidence" value="ECO:0007669"/>
    <property type="project" value="UniProtKB-SubCell"/>
</dbReference>
<dbReference type="GO" id="GO:0051015">
    <property type="term" value="F:actin filament binding"/>
    <property type="evidence" value="ECO:0000318"/>
    <property type="project" value="GO_Central"/>
</dbReference>
<dbReference type="GO" id="GO:0008017">
    <property type="term" value="F:microtubule binding"/>
    <property type="evidence" value="ECO:0007669"/>
    <property type="project" value="InterPro"/>
</dbReference>
<dbReference type="GO" id="GO:0051764">
    <property type="term" value="P:actin crosslink formation"/>
    <property type="evidence" value="ECO:0000318"/>
    <property type="project" value="GO_Central"/>
</dbReference>
<dbReference type="GO" id="GO:0016255">
    <property type="term" value="P:attachment of GPI anchor to protein"/>
    <property type="evidence" value="ECO:0000250"/>
    <property type="project" value="UniProtKB"/>
</dbReference>
<dbReference type="GO" id="GO:0030707">
    <property type="term" value="P:follicle cell of egg chamber development"/>
    <property type="evidence" value="ECO:0000315"/>
    <property type="project" value="FlyBase"/>
</dbReference>
<dbReference type="GO" id="GO:0030713">
    <property type="term" value="P:follicle cell of egg chamber stalk formation"/>
    <property type="evidence" value="ECO:0000315"/>
    <property type="project" value="FlyBase"/>
</dbReference>
<dbReference type="GO" id="GO:0001578">
    <property type="term" value="P:microtubule bundle formation"/>
    <property type="evidence" value="ECO:0000318"/>
    <property type="project" value="GO_Central"/>
</dbReference>
<dbReference type="GO" id="GO:0045746">
    <property type="term" value="P:negative regulation of Notch signaling pathway"/>
    <property type="evidence" value="ECO:0000315"/>
    <property type="project" value="FlyBase"/>
</dbReference>
<dbReference type="GO" id="GO:1904825">
    <property type="term" value="P:protein localization to microtubule plus-end"/>
    <property type="evidence" value="ECO:0000318"/>
    <property type="project" value="GO_Central"/>
</dbReference>
<dbReference type="GO" id="GO:0031110">
    <property type="term" value="P:regulation of microtubule polymerization or depolymerization"/>
    <property type="evidence" value="ECO:0000318"/>
    <property type="project" value="GO_Central"/>
</dbReference>
<dbReference type="CDD" id="cd21268">
    <property type="entry name" value="CH_GAS2L1_2"/>
    <property type="match status" value="1"/>
</dbReference>
<dbReference type="FunFam" id="1.10.418.10:FF:000093">
    <property type="entry name" value="GAS2-like protein 1"/>
    <property type="match status" value="1"/>
</dbReference>
<dbReference type="FunFam" id="3.30.920.20:FF:000004">
    <property type="entry name" value="GAS2-like protein 1 isoform X1"/>
    <property type="match status" value="1"/>
</dbReference>
<dbReference type="Gene3D" id="1.10.418.10">
    <property type="entry name" value="Calponin-like domain"/>
    <property type="match status" value="1"/>
</dbReference>
<dbReference type="Gene3D" id="3.30.920.20">
    <property type="entry name" value="Gas2-like domain"/>
    <property type="match status" value="1"/>
</dbReference>
<dbReference type="InterPro" id="IPR001715">
    <property type="entry name" value="CH_dom"/>
</dbReference>
<dbReference type="InterPro" id="IPR036872">
    <property type="entry name" value="CH_dom_sf"/>
</dbReference>
<dbReference type="InterPro" id="IPR003108">
    <property type="entry name" value="GAR_dom"/>
</dbReference>
<dbReference type="InterPro" id="IPR036534">
    <property type="entry name" value="GAR_dom_sf"/>
</dbReference>
<dbReference type="PANTHER" id="PTHR46756:SF18">
    <property type="entry name" value="GAS2-LIKE PROTEIN PICKLED EGGS"/>
    <property type="match status" value="1"/>
</dbReference>
<dbReference type="PANTHER" id="PTHR46756">
    <property type="entry name" value="TRANSGELIN"/>
    <property type="match status" value="1"/>
</dbReference>
<dbReference type="Pfam" id="PF00307">
    <property type="entry name" value="CH"/>
    <property type="match status" value="1"/>
</dbReference>
<dbReference type="Pfam" id="PF02187">
    <property type="entry name" value="GAS2"/>
    <property type="match status" value="1"/>
</dbReference>
<dbReference type="SMART" id="SM00033">
    <property type="entry name" value="CH"/>
    <property type="match status" value="1"/>
</dbReference>
<dbReference type="SMART" id="SM00243">
    <property type="entry name" value="GAS2"/>
    <property type="match status" value="1"/>
</dbReference>
<dbReference type="SUPFAM" id="SSF47576">
    <property type="entry name" value="Calponin-homology domain, CH-domain"/>
    <property type="match status" value="1"/>
</dbReference>
<dbReference type="SUPFAM" id="SSF143575">
    <property type="entry name" value="GAS2 domain-like"/>
    <property type="match status" value="1"/>
</dbReference>
<dbReference type="PROSITE" id="PS50021">
    <property type="entry name" value="CH"/>
    <property type="match status" value="1"/>
</dbReference>
<dbReference type="PROSITE" id="PS51460">
    <property type="entry name" value="GAR"/>
    <property type="match status" value="1"/>
</dbReference>
<protein>
    <recommendedName>
        <fullName evidence="5">GAS2-like protein pickled eggs</fullName>
    </recommendedName>
</protein>
<accession>Q9W3Y4</accession>
<accession>Q95TD5</accession>
<feature type="chain" id="PRO_0000436918" description="GAS2-like protein pickled eggs" evidence="5">
    <location>
        <begin position="1"/>
        <end position="977"/>
    </location>
</feature>
<feature type="domain" description="Calponin-homology (CH)" evidence="1">
    <location>
        <begin position="20"/>
        <end position="159"/>
    </location>
</feature>
<feature type="domain" description="GAR" evidence="2">
    <location>
        <begin position="252"/>
        <end position="324"/>
    </location>
</feature>
<feature type="region of interest" description="Disordered" evidence="3">
    <location>
        <begin position="218"/>
        <end position="245"/>
    </location>
</feature>
<feature type="region of interest" description="Disordered" evidence="3">
    <location>
        <begin position="397"/>
        <end position="543"/>
    </location>
</feature>
<feature type="region of interest" description="Disordered" evidence="3">
    <location>
        <begin position="557"/>
        <end position="624"/>
    </location>
</feature>
<feature type="region of interest" description="Disordered" evidence="3">
    <location>
        <begin position="666"/>
        <end position="685"/>
    </location>
</feature>
<feature type="region of interest" description="Disordered" evidence="3">
    <location>
        <begin position="693"/>
        <end position="803"/>
    </location>
</feature>
<feature type="region of interest" description="Disordered" evidence="3">
    <location>
        <begin position="910"/>
        <end position="977"/>
    </location>
</feature>
<feature type="compositionally biased region" description="Acidic residues" evidence="3">
    <location>
        <begin position="221"/>
        <end position="236"/>
    </location>
</feature>
<feature type="compositionally biased region" description="Polar residues" evidence="3">
    <location>
        <begin position="399"/>
        <end position="428"/>
    </location>
</feature>
<feature type="compositionally biased region" description="Polar residues" evidence="3">
    <location>
        <begin position="436"/>
        <end position="454"/>
    </location>
</feature>
<feature type="compositionally biased region" description="Gly residues" evidence="3">
    <location>
        <begin position="502"/>
        <end position="527"/>
    </location>
</feature>
<feature type="compositionally biased region" description="Polar residues" evidence="3">
    <location>
        <begin position="577"/>
        <end position="589"/>
    </location>
</feature>
<feature type="compositionally biased region" description="Acidic residues" evidence="3">
    <location>
        <begin position="601"/>
        <end position="620"/>
    </location>
</feature>
<feature type="compositionally biased region" description="Polar residues" evidence="3">
    <location>
        <begin position="666"/>
        <end position="677"/>
    </location>
</feature>
<feature type="compositionally biased region" description="Polar residues" evidence="3">
    <location>
        <begin position="731"/>
        <end position="741"/>
    </location>
</feature>
<feature type="compositionally biased region" description="Low complexity" evidence="3">
    <location>
        <begin position="928"/>
        <end position="953"/>
    </location>
</feature>
<feature type="sequence conflict" description="In Ref. 4; AAL13365." evidence="5" ref="4">
    <original>T</original>
    <variation>I</variation>
    <location>
        <position position="873"/>
    </location>
</feature>
<evidence type="ECO:0000255" key="1">
    <source>
        <dbReference type="PROSITE-ProRule" id="PRU00044"/>
    </source>
</evidence>
<evidence type="ECO:0000255" key="2">
    <source>
        <dbReference type="PROSITE-ProRule" id="PRU00792"/>
    </source>
</evidence>
<evidence type="ECO:0000256" key="3">
    <source>
        <dbReference type="SAM" id="MobiDB-lite"/>
    </source>
</evidence>
<evidence type="ECO:0000269" key="4">
    <source>
    </source>
</evidence>
<evidence type="ECO:0000305" key="5"/>
<evidence type="ECO:0000312" key="6">
    <source>
        <dbReference type="EMBL" id="AAL13365.1"/>
    </source>
</evidence>
<evidence type="ECO:0000312" key="7">
    <source>
        <dbReference type="EMBL" id="AAO39480.1"/>
    </source>
</evidence>
<evidence type="ECO:0000312" key="8">
    <source>
        <dbReference type="FlyBase" id="FBgn0029881"/>
    </source>
</evidence>
<evidence type="ECO:0000312" key="9">
    <source>
        <dbReference type="Proteomes" id="UP000000803"/>
    </source>
</evidence>